<protein>
    <recommendedName>
        <fullName evidence="1">Glycerol kinase</fullName>
        <ecNumber evidence="1">2.7.1.30</ecNumber>
    </recommendedName>
    <alternativeName>
        <fullName evidence="1">ATP:glycerol 3-phosphotransferase</fullName>
    </alternativeName>
    <alternativeName>
        <fullName evidence="1">Glycerokinase</fullName>
        <shortName evidence="1">GK</shortName>
    </alternativeName>
</protein>
<reference key="1">
    <citation type="submission" date="2009-02" db="EMBL/GenBank/DDBJ databases">
        <title>Vibrio splendidus str. LGP32 complete genome.</title>
        <authorList>
            <person name="Mazel D."/>
            <person name="Le Roux F."/>
        </authorList>
    </citation>
    <scope>NUCLEOTIDE SEQUENCE [LARGE SCALE GENOMIC DNA]</scope>
    <source>
        <strain>LGP32</strain>
    </source>
</reference>
<evidence type="ECO:0000255" key="1">
    <source>
        <dbReference type="HAMAP-Rule" id="MF_00186"/>
    </source>
</evidence>
<name>GLPK_VIBA3</name>
<comment type="function">
    <text evidence="1">Key enzyme in the regulation of glycerol uptake and metabolism. Catalyzes the phosphorylation of glycerol to yield sn-glycerol 3-phosphate.</text>
</comment>
<comment type="catalytic activity">
    <reaction evidence="1">
        <text>glycerol + ATP = sn-glycerol 3-phosphate + ADP + H(+)</text>
        <dbReference type="Rhea" id="RHEA:21644"/>
        <dbReference type="ChEBI" id="CHEBI:15378"/>
        <dbReference type="ChEBI" id="CHEBI:17754"/>
        <dbReference type="ChEBI" id="CHEBI:30616"/>
        <dbReference type="ChEBI" id="CHEBI:57597"/>
        <dbReference type="ChEBI" id="CHEBI:456216"/>
        <dbReference type="EC" id="2.7.1.30"/>
    </reaction>
</comment>
<comment type="activity regulation">
    <text evidence="1">Inhibited by fructose 1,6-bisphosphate (FBP).</text>
</comment>
<comment type="pathway">
    <text evidence="1">Polyol metabolism; glycerol degradation via glycerol kinase pathway; sn-glycerol 3-phosphate from glycerol: step 1/1.</text>
</comment>
<comment type="similarity">
    <text evidence="1">Belongs to the FGGY kinase family.</text>
</comment>
<dbReference type="EC" id="2.7.1.30" evidence="1"/>
<dbReference type="EMBL" id="FM954973">
    <property type="protein sequence ID" value="CAV25379.1"/>
    <property type="molecule type" value="Genomic_DNA"/>
</dbReference>
<dbReference type="SMR" id="B7VQ85"/>
<dbReference type="STRING" id="575788.VS_II0115"/>
<dbReference type="KEGG" id="vsp:VS_II0115"/>
<dbReference type="PATRIC" id="fig|575788.5.peg.114"/>
<dbReference type="eggNOG" id="COG0554">
    <property type="taxonomic scope" value="Bacteria"/>
</dbReference>
<dbReference type="HOGENOM" id="CLU_009281_2_3_6"/>
<dbReference type="UniPathway" id="UPA00618">
    <property type="reaction ID" value="UER00672"/>
</dbReference>
<dbReference type="Proteomes" id="UP000009100">
    <property type="component" value="Chromosome 2"/>
</dbReference>
<dbReference type="GO" id="GO:0005829">
    <property type="term" value="C:cytosol"/>
    <property type="evidence" value="ECO:0007669"/>
    <property type="project" value="TreeGrafter"/>
</dbReference>
<dbReference type="GO" id="GO:0005524">
    <property type="term" value="F:ATP binding"/>
    <property type="evidence" value="ECO:0007669"/>
    <property type="project" value="UniProtKB-UniRule"/>
</dbReference>
<dbReference type="GO" id="GO:0004370">
    <property type="term" value="F:glycerol kinase activity"/>
    <property type="evidence" value="ECO:0000250"/>
    <property type="project" value="UniProtKB"/>
</dbReference>
<dbReference type="GO" id="GO:0019563">
    <property type="term" value="P:glycerol catabolic process"/>
    <property type="evidence" value="ECO:0007669"/>
    <property type="project" value="UniProtKB-UniRule"/>
</dbReference>
<dbReference type="GO" id="GO:0006071">
    <property type="term" value="P:glycerol metabolic process"/>
    <property type="evidence" value="ECO:0000250"/>
    <property type="project" value="UniProtKB"/>
</dbReference>
<dbReference type="GO" id="GO:0006072">
    <property type="term" value="P:glycerol-3-phosphate metabolic process"/>
    <property type="evidence" value="ECO:0007669"/>
    <property type="project" value="InterPro"/>
</dbReference>
<dbReference type="CDD" id="cd07786">
    <property type="entry name" value="FGGY_EcGK_like"/>
    <property type="match status" value="1"/>
</dbReference>
<dbReference type="FunFam" id="3.30.420.40:FF:000007">
    <property type="entry name" value="Glycerol kinase"/>
    <property type="match status" value="1"/>
</dbReference>
<dbReference type="FunFam" id="3.30.420.40:FF:000008">
    <property type="entry name" value="Glycerol kinase"/>
    <property type="match status" value="1"/>
</dbReference>
<dbReference type="Gene3D" id="3.30.420.40">
    <property type="match status" value="2"/>
</dbReference>
<dbReference type="HAMAP" id="MF_00186">
    <property type="entry name" value="Glycerol_kin"/>
    <property type="match status" value="1"/>
</dbReference>
<dbReference type="InterPro" id="IPR043129">
    <property type="entry name" value="ATPase_NBD"/>
</dbReference>
<dbReference type="InterPro" id="IPR000577">
    <property type="entry name" value="Carb_kinase_FGGY"/>
</dbReference>
<dbReference type="InterPro" id="IPR018483">
    <property type="entry name" value="Carb_kinase_FGGY_CS"/>
</dbReference>
<dbReference type="InterPro" id="IPR018485">
    <property type="entry name" value="FGGY_C"/>
</dbReference>
<dbReference type="InterPro" id="IPR018484">
    <property type="entry name" value="FGGY_N"/>
</dbReference>
<dbReference type="InterPro" id="IPR005999">
    <property type="entry name" value="Glycerol_kin"/>
</dbReference>
<dbReference type="NCBIfam" id="TIGR01311">
    <property type="entry name" value="glycerol_kin"/>
    <property type="match status" value="1"/>
</dbReference>
<dbReference type="NCBIfam" id="NF000756">
    <property type="entry name" value="PRK00047.1"/>
    <property type="match status" value="1"/>
</dbReference>
<dbReference type="PANTHER" id="PTHR10196:SF69">
    <property type="entry name" value="GLYCEROL KINASE"/>
    <property type="match status" value="1"/>
</dbReference>
<dbReference type="PANTHER" id="PTHR10196">
    <property type="entry name" value="SUGAR KINASE"/>
    <property type="match status" value="1"/>
</dbReference>
<dbReference type="Pfam" id="PF02782">
    <property type="entry name" value="FGGY_C"/>
    <property type="match status" value="1"/>
</dbReference>
<dbReference type="Pfam" id="PF00370">
    <property type="entry name" value="FGGY_N"/>
    <property type="match status" value="1"/>
</dbReference>
<dbReference type="PIRSF" id="PIRSF000538">
    <property type="entry name" value="GlpK"/>
    <property type="match status" value="1"/>
</dbReference>
<dbReference type="SUPFAM" id="SSF53067">
    <property type="entry name" value="Actin-like ATPase domain"/>
    <property type="match status" value="2"/>
</dbReference>
<dbReference type="PROSITE" id="PS00933">
    <property type="entry name" value="FGGY_KINASES_1"/>
    <property type="match status" value="1"/>
</dbReference>
<dbReference type="PROSITE" id="PS00445">
    <property type="entry name" value="FGGY_KINASES_2"/>
    <property type="match status" value="1"/>
</dbReference>
<gene>
    <name evidence="1" type="primary">glpK</name>
    <name type="ordered locus">VS_II0115</name>
</gene>
<organism>
    <name type="scientific">Vibrio atlanticus (strain LGP32)</name>
    <name type="common">Vibrio splendidus (strain Mel32)</name>
    <dbReference type="NCBI Taxonomy" id="575788"/>
    <lineage>
        <taxon>Bacteria</taxon>
        <taxon>Pseudomonadati</taxon>
        <taxon>Pseudomonadota</taxon>
        <taxon>Gammaproteobacteria</taxon>
        <taxon>Vibrionales</taxon>
        <taxon>Vibrionaceae</taxon>
        <taxon>Vibrio</taxon>
    </lineage>
</organism>
<proteinExistence type="inferred from homology"/>
<feature type="chain" id="PRO_1000124212" description="Glycerol kinase">
    <location>
        <begin position="1"/>
        <end position="507"/>
    </location>
</feature>
<feature type="binding site" evidence="1">
    <location>
        <position position="14"/>
    </location>
    <ligand>
        <name>ADP</name>
        <dbReference type="ChEBI" id="CHEBI:456216"/>
    </ligand>
</feature>
<feature type="binding site" evidence="1">
    <location>
        <position position="14"/>
    </location>
    <ligand>
        <name>ATP</name>
        <dbReference type="ChEBI" id="CHEBI:30616"/>
    </ligand>
</feature>
<feature type="binding site" evidence="1">
    <location>
        <position position="14"/>
    </location>
    <ligand>
        <name>sn-glycerol 3-phosphate</name>
        <dbReference type="ChEBI" id="CHEBI:57597"/>
    </ligand>
</feature>
<feature type="binding site" evidence="1">
    <location>
        <position position="15"/>
    </location>
    <ligand>
        <name>ATP</name>
        <dbReference type="ChEBI" id="CHEBI:30616"/>
    </ligand>
</feature>
<feature type="binding site" evidence="1">
    <location>
        <position position="16"/>
    </location>
    <ligand>
        <name>ATP</name>
        <dbReference type="ChEBI" id="CHEBI:30616"/>
    </ligand>
</feature>
<feature type="binding site" evidence="1">
    <location>
        <position position="18"/>
    </location>
    <ligand>
        <name>ADP</name>
        <dbReference type="ChEBI" id="CHEBI:456216"/>
    </ligand>
</feature>
<feature type="binding site" evidence="1">
    <location>
        <position position="84"/>
    </location>
    <ligand>
        <name>glycerol</name>
        <dbReference type="ChEBI" id="CHEBI:17754"/>
    </ligand>
</feature>
<feature type="binding site" evidence="1">
    <location>
        <position position="84"/>
    </location>
    <ligand>
        <name>sn-glycerol 3-phosphate</name>
        <dbReference type="ChEBI" id="CHEBI:57597"/>
    </ligand>
</feature>
<feature type="binding site" evidence="1">
    <location>
        <position position="85"/>
    </location>
    <ligand>
        <name>glycerol</name>
        <dbReference type="ChEBI" id="CHEBI:17754"/>
    </ligand>
</feature>
<feature type="binding site" evidence="1">
    <location>
        <position position="85"/>
    </location>
    <ligand>
        <name>sn-glycerol 3-phosphate</name>
        <dbReference type="ChEBI" id="CHEBI:57597"/>
    </ligand>
</feature>
<feature type="binding site" evidence="1">
    <location>
        <position position="136"/>
    </location>
    <ligand>
        <name>glycerol</name>
        <dbReference type="ChEBI" id="CHEBI:17754"/>
    </ligand>
</feature>
<feature type="binding site" evidence="1">
    <location>
        <position position="136"/>
    </location>
    <ligand>
        <name>sn-glycerol 3-phosphate</name>
        <dbReference type="ChEBI" id="CHEBI:57597"/>
    </ligand>
</feature>
<feature type="binding site" evidence="1">
    <location>
        <position position="246"/>
    </location>
    <ligand>
        <name>glycerol</name>
        <dbReference type="ChEBI" id="CHEBI:17754"/>
    </ligand>
</feature>
<feature type="binding site" evidence="1">
    <location>
        <position position="246"/>
    </location>
    <ligand>
        <name>sn-glycerol 3-phosphate</name>
        <dbReference type="ChEBI" id="CHEBI:57597"/>
    </ligand>
</feature>
<feature type="binding site" evidence="1">
    <location>
        <position position="247"/>
    </location>
    <ligand>
        <name>glycerol</name>
        <dbReference type="ChEBI" id="CHEBI:17754"/>
    </ligand>
</feature>
<feature type="binding site" evidence="1">
    <location>
        <position position="268"/>
    </location>
    <ligand>
        <name>ADP</name>
        <dbReference type="ChEBI" id="CHEBI:456216"/>
    </ligand>
</feature>
<feature type="binding site" evidence="1">
    <location>
        <position position="268"/>
    </location>
    <ligand>
        <name>ATP</name>
        <dbReference type="ChEBI" id="CHEBI:30616"/>
    </ligand>
</feature>
<feature type="binding site" evidence="1">
    <location>
        <position position="311"/>
    </location>
    <ligand>
        <name>ADP</name>
        <dbReference type="ChEBI" id="CHEBI:456216"/>
    </ligand>
</feature>
<feature type="binding site" evidence="1">
    <location>
        <position position="311"/>
    </location>
    <ligand>
        <name>ATP</name>
        <dbReference type="ChEBI" id="CHEBI:30616"/>
    </ligand>
</feature>
<feature type="binding site" evidence="1">
    <location>
        <position position="315"/>
    </location>
    <ligand>
        <name>ATP</name>
        <dbReference type="ChEBI" id="CHEBI:30616"/>
    </ligand>
</feature>
<feature type="binding site" evidence="1">
    <location>
        <position position="412"/>
    </location>
    <ligand>
        <name>ADP</name>
        <dbReference type="ChEBI" id="CHEBI:456216"/>
    </ligand>
</feature>
<feature type="binding site" evidence="1">
    <location>
        <position position="412"/>
    </location>
    <ligand>
        <name>ATP</name>
        <dbReference type="ChEBI" id="CHEBI:30616"/>
    </ligand>
</feature>
<feature type="binding site" evidence="1">
    <location>
        <position position="416"/>
    </location>
    <ligand>
        <name>ADP</name>
        <dbReference type="ChEBI" id="CHEBI:456216"/>
    </ligand>
</feature>
<keyword id="KW-0067">ATP-binding</keyword>
<keyword id="KW-0319">Glycerol metabolism</keyword>
<keyword id="KW-0418">Kinase</keyword>
<keyword id="KW-0547">Nucleotide-binding</keyword>
<keyword id="KW-0808">Transferase</keyword>
<sequence length="507" mass="55870">MTEQKYIVALDQGTTSSRAVILDHDANIVSSSQREFTQIYPKAGWVEHDPMEIWATQSSTLVEALAKAGIRSDELAGIGITNQRETTIVWNKETGKPVYNAIVWQCRRTADICEDLKARGLEDYVRDNTGLVLDPYFSGTKVKWILDNVEGAREDAEAGKLLFGTVDTWLVWKMTQGRVHVTDYTNASRTMLFNINDLCWDQKLLDEMGIPSSMMPEVKRSSEVYGQTNLGGKGGTRIPIAGIAGDQQAALYGQMCVEAGQAKNTYGTGCFLLMNTGQEKVTSKNGLLTTLACGPKGEPAYALEGAVFMGGASIQWLRDEMKLLAGAEDSEYFATKVDSSNGVYVVPAFTGLGAPYWDAYARGTIVGLTRGVNSNHIIRATLEGIAYQTRDVLDAMQADSGIKLANLRVDGGAVANNFLMQFQSDVLDTEVHRPEVTEVTALGAAYLAGLAVGFWDSIDELQDKAVLNRTFMPHHDEEKRNRRYKGWKRAIKCAQVWSELHDDDDEE</sequence>
<accession>B7VQ85</accession>